<name>HPCR_ECOLX</name>
<accession>P62573</accession>
<accession>Q07095</accession>
<keyword id="KW-0238">DNA-binding</keyword>
<keyword id="KW-0678">Repressor</keyword>
<keyword id="KW-0804">Transcription</keyword>
<keyword id="KW-0805">Transcription regulation</keyword>
<protein>
    <recommendedName>
        <fullName>Homoprotocatechuate degradative operon repressor</fullName>
    </recommendedName>
</protein>
<dbReference type="EMBL" id="S56952">
    <property type="protein sequence ID" value="AAB25801.1"/>
    <property type="molecule type" value="Genomic_DNA"/>
</dbReference>
<dbReference type="EMBL" id="Z37980">
    <property type="protein sequence ID" value="CAA86039.1"/>
    <property type="molecule type" value="Genomic_DNA"/>
</dbReference>
<dbReference type="PIR" id="S30280">
    <property type="entry name" value="S30280"/>
</dbReference>
<dbReference type="RefSeq" id="WP_000543916.1">
    <property type="nucleotide sequence ID" value="NZ_WXYZ01000001.1"/>
</dbReference>
<dbReference type="SMR" id="P62573"/>
<dbReference type="STRING" id="585034.ECIAI1_4576"/>
<dbReference type="GeneID" id="75202963"/>
<dbReference type="eggNOG" id="COG1846">
    <property type="taxonomic scope" value="Bacteria"/>
</dbReference>
<dbReference type="OMA" id="QIARRCC"/>
<dbReference type="GO" id="GO:0003677">
    <property type="term" value="F:DNA binding"/>
    <property type="evidence" value="ECO:0007669"/>
    <property type="project" value="UniProtKB-KW"/>
</dbReference>
<dbReference type="GO" id="GO:0003700">
    <property type="term" value="F:DNA-binding transcription factor activity"/>
    <property type="evidence" value="ECO:0007669"/>
    <property type="project" value="InterPro"/>
</dbReference>
<dbReference type="GO" id="GO:0045892">
    <property type="term" value="P:negative regulation of DNA-templated transcription"/>
    <property type="evidence" value="ECO:0007669"/>
    <property type="project" value="InterPro"/>
</dbReference>
<dbReference type="GO" id="GO:0006950">
    <property type="term" value="P:response to stress"/>
    <property type="evidence" value="ECO:0007669"/>
    <property type="project" value="TreeGrafter"/>
</dbReference>
<dbReference type="FunFam" id="1.10.10.10:FF:000301">
    <property type="entry name" value="Homoprotocatechuate degradation operon regulator HpaR"/>
    <property type="match status" value="1"/>
</dbReference>
<dbReference type="Gene3D" id="1.10.10.10">
    <property type="entry name" value="Winged helix-like DNA-binding domain superfamily/Winged helix DNA-binding domain"/>
    <property type="match status" value="1"/>
</dbReference>
<dbReference type="InterPro" id="IPR012712">
    <property type="entry name" value="HpaR/FarR"/>
</dbReference>
<dbReference type="InterPro" id="IPR000835">
    <property type="entry name" value="HTH_MarR-typ"/>
</dbReference>
<dbReference type="InterPro" id="IPR039422">
    <property type="entry name" value="MarR/SlyA-like"/>
</dbReference>
<dbReference type="InterPro" id="IPR023187">
    <property type="entry name" value="Tscrpt_reg_MarR-type_CS"/>
</dbReference>
<dbReference type="InterPro" id="IPR036388">
    <property type="entry name" value="WH-like_DNA-bd_sf"/>
</dbReference>
<dbReference type="InterPro" id="IPR036390">
    <property type="entry name" value="WH_DNA-bd_sf"/>
</dbReference>
<dbReference type="NCBIfam" id="TIGR02337">
    <property type="entry name" value="HpaR"/>
    <property type="match status" value="1"/>
</dbReference>
<dbReference type="PANTHER" id="PTHR33164:SF13">
    <property type="entry name" value="4-HYDROXYPHENYLACETATE CATABOLISM PROTEIN"/>
    <property type="match status" value="1"/>
</dbReference>
<dbReference type="PANTHER" id="PTHR33164">
    <property type="entry name" value="TRANSCRIPTIONAL REGULATOR, MARR FAMILY"/>
    <property type="match status" value="1"/>
</dbReference>
<dbReference type="Pfam" id="PF01047">
    <property type="entry name" value="MarR"/>
    <property type="match status" value="1"/>
</dbReference>
<dbReference type="PRINTS" id="PR00598">
    <property type="entry name" value="HTHMARR"/>
</dbReference>
<dbReference type="SMART" id="SM00347">
    <property type="entry name" value="HTH_MARR"/>
    <property type="match status" value="1"/>
</dbReference>
<dbReference type="SUPFAM" id="SSF46785">
    <property type="entry name" value="Winged helix' DNA-binding domain"/>
    <property type="match status" value="1"/>
</dbReference>
<dbReference type="PROSITE" id="PS01117">
    <property type="entry name" value="HTH_MARR_1"/>
    <property type="match status" value="1"/>
</dbReference>
<dbReference type="PROSITE" id="PS50995">
    <property type="entry name" value="HTH_MARR_2"/>
    <property type="match status" value="1"/>
</dbReference>
<organism>
    <name type="scientific">Escherichia coli</name>
    <dbReference type="NCBI Taxonomy" id="562"/>
    <lineage>
        <taxon>Bacteria</taxon>
        <taxon>Pseudomonadati</taxon>
        <taxon>Pseudomonadota</taxon>
        <taxon>Gammaproteobacteria</taxon>
        <taxon>Enterobacterales</taxon>
        <taxon>Enterobacteriaceae</taxon>
        <taxon>Escherichia</taxon>
    </lineage>
</organism>
<evidence type="ECO:0000255" key="1">
    <source>
        <dbReference type="PROSITE-ProRule" id="PRU00345"/>
    </source>
</evidence>
<sequence>MHDSLTIALLQAREAAMSYFRPIVKRHNLTEQQWRIVRILAESPSMDFHDLAYRACILRPSLTGILTRMERDGLVLRLKPINDQRKLYISLTKEGQALYNRAQTQIEEAYRQIEAQFTAEKMQQLTHLLEEFIALGNSRQEDIPGDNE</sequence>
<comment type="function">
    <text>Repressor for the homoprotocatechuate catabolic pathway hpc operon.</text>
</comment>
<reference key="1">
    <citation type="journal article" date="1993" name="Mol. Gen. Genet.">
        <title>The Escherichia coli C homoprotocatechuate degradative operon: hpc gene order, direction of transcription and control of expression.</title>
        <authorList>
            <person name="Roper D.I."/>
            <person name="Fawcett T."/>
            <person name="Cooper R.A."/>
        </authorList>
    </citation>
    <scope>NUCLEOTIDE SEQUENCE [GENOMIC DNA]</scope>
    <source>
        <strain>C</strain>
    </source>
</reference>
<reference key="2">
    <citation type="journal article" date="1996" name="J. Bacteriol.">
        <title>Molecular characterization of the 4-hydroxyphenylacetate catabolic pathway of Escherichia coli W: engineering a mobile aromatic degradative cluster.</title>
        <authorList>
            <person name="Prieto M.A."/>
            <person name="Diaz E."/>
            <person name="Garcia J.L."/>
        </authorList>
    </citation>
    <scope>NUCLEOTIDE SEQUENCE [GENOMIC DNA]</scope>
    <source>
        <strain>W / ATCC 11105 / DSM 1900 / 113-3</strain>
    </source>
</reference>
<feature type="chain" id="PRO_0000054359" description="Homoprotocatechuate degradative operon repressor">
    <location>
        <begin position="1"/>
        <end position="148"/>
    </location>
</feature>
<feature type="domain" description="HTH marR-type" evidence="1">
    <location>
        <begin position="2"/>
        <end position="134"/>
    </location>
</feature>
<gene>
    <name type="primary">hpcR</name>
    <name type="synonym">hpaR</name>
</gene>
<proteinExistence type="predicted"/>